<comment type="function">
    <text evidence="3 4">Catalyzes the last step of heme biosynthesis by inserting ferrous iron into protoporphyrin IX to produce protoheme. Produces heme for photosynthetic cytochromes, and for proteins involved in abiotic and biotic stress responses (PubMed:24329537). May play a role in the quality control of individual chloroplasts during photo-oxidative stress through regulation of heme biosynthesis (PubMed:26494759).</text>
</comment>
<comment type="catalytic activity">
    <reaction evidence="9">
        <text>heme b + 2 H(+) = protoporphyrin IX + Fe(2+)</text>
        <dbReference type="Rhea" id="RHEA:22584"/>
        <dbReference type="ChEBI" id="CHEBI:15378"/>
        <dbReference type="ChEBI" id="CHEBI:29033"/>
        <dbReference type="ChEBI" id="CHEBI:57306"/>
        <dbReference type="ChEBI" id="CHEBI:60344"/>
        <dbReference type="EC" id="4.98.1.1"/>
    </reaction>
</comment>
<comment type="pathway">
    <text evidence="9">Porphyrin-containing compound metabolism; protoheme biosynthesis; protoheme from protoporphyrin-IX: step 1/1.</text>
</comment>
<comment type="subcellular location">
    <subcellularLocation>
        <location evidence="5">Plastid</location>
        <location evidence="5">Chloroplast membrane</location>
        <topology evidence="11">Peripheral membrane protein</topology>
    </subcellularLocation>
    <subcellularLocation>
        <location evidence="5">Plastid</location>
        <location evidence="5">Chloroplast thylakoid membrane</location>
        <topology evidence="11">Peripheral membrane protein</topology>
    </subcellularLocation>
    <text evidence="10">(PubMed:11602264) shows experimental evidences that FC2 is not present in Arabidopsis mitochondria in vivo.</text>
</comment>
<comment type="alternative products">
    <event type="alternative splicing"/>
    <isoform>
        <id>O04921-1</id>
        <name>1</name>
        <sequence type="displayed"/>
    </isoform>
    <text>A number of isoforms are produced. According to EST sequences.</text>
</comment>
<comment type="tissue specificity">
    <text evidence="2">Expressed in leaves and flowers.</text>
</comment>
<comment type="induction">
    <text evidence="2">Down-regulated by wounding or oxidative stress.</text>
</comment>
<comment type="disruption phenotype">
    <text evidence="3 4">Abnormal, small, and pale green rosette leaves (PubMed:24329537, PubMed:26494759). Low contents in chlorophylls, carotenoids and photosynthetic proteins in leaves. Impaired photosynthetic performance. Increased resistance to salt and flagellin treatment (PubMed:24329537). Increased sensitivity to de-etiolation (PubMed:26494759).</text>
</comment>
<comment type="similarity">
    <text evidence="9">Belongs to the ferrochelatase family.</text>
</comment>
<protein>
    <recommendedName>
        <fullName evidence="9">Ferrochelatase-2, chloroplastic</fullName>
        <shortName evidence="9">AtFC2</shortName>
        <ecNumber evidence="9">4.98.1.1</ecNumber>
    </recommendedName>
    <alternativeName>
        <fullName evidence="8">Ferrochelatase-II</fullName>
        <shortName evidence="6">AtFC-II</shortName>
    </alternativeName>
    <alternativeName>
        <fullName evidence="9">Heme synthase 2</fullName>
    </alternativeName>
    <alternativeName>
        <fullName evidence="9">Protoheme ferro-lyase 2</fullName>
    </alternativeName>
</protein>
<feature type="transit peptide" description="Chloroplast" evidence="12">
    <location>
        <begin position="1"/>
        <end position="83"/>
    </location>
</feature>
<feature type="chain" id="PRO_0000008881" description="Ferrochelatase-2, chloroplastic">
    <location>
        <begin position="84"/>
        <end position="512"/>
    </location>
</feature>
<feature type="region of interest" description="Disordered" evidence="1">
    <location>
        <begin position="1"/>
        <end position="32"/>
    </location>
</feature>
<feature type="compositionally biased region" description="Low complexity" evidence="1">
    <location>
        <begin position="9"/>
        <end position="21"/>
    </location>
</feature>
<feature type="modified residue" description="N-acetylvaline" evidence="12">
    <location>
        <position position="84"/>
    </location>
</feature>
<feature type="sequence conflict" description="In Ref. 1; CAA73614." evidence="9" ref="1">
    <original>SKEG</original>
    <variation>ARR</variation>
    <location>
        <begin position="156"/>
        <end position="159"/>
    </location>
</feature>
<accession>O04921</accession>
<accession>O23623</accession>
<accession>Q7GB39</accession>
<organism>
    <name type="scientific">Arabidopsis thaliana</name>
    <name type="common">Mouse-ear cress</name>
    <dbReference type="NCBI Taxonomy" id="3702"/>
    <lineage>
        <taxon>Eukaryota</taxon>
        <taxon>Viridiplantae</taxon>
        <taxon>Streptophyta</taxon>
        <taxon>Embryophyta</taxon>
        <taxon>Tracheophyta</taxon>
        <taxon>Spermatophyta</taxon>
        <taxon>Magnoliopsida</taxon>
        <taxon>eudicotyledons</taxon>
        <taxon>Gunneridae</taxon>
        <taxon>Pentapetalae</taxon>
        <taxon>rosids</taxon>
        <taxon>malvids</taxon>
        <taxon>Brassicales</taxon>
        <taxon>Brassicaceae</taxon>
        <taxon>Camelineae</taxon>
        <taxon>Arabidopsis</taxon>
    </lineage>
</organism>
<evidence type="ECO:0000256" key="1">
    <source>
        <dbReference type="SAM" id="MobiDB-lite"/>
    </source>
</evidence>
<evidence type="ECO:0000269" key="2">
    <source>
    </source>
</evidence>
<evidence type="ECO:0000269" key="3">
    <source>
    </source>
</evidence>
<evidence type="ECO:0000269" key="4">
    <source>
    </source>
</evidence>
<evidence type="ECO:0000269" key="5">
    <source>
    </source>
</evidence>
<evidence type="ECO:0000303" key="6">
    <source>
    </source>
</evidence>
<evidence type="ECO:0000303" key="7">
    <source>
    </source>
</evidence>
<evidence type="ECO:0000303" key="8">
    <source>
    </source>
</evidence>
<evidence type="ECO:0000305" key="9"/>
<evidence type="ECO:0000305" key="10">
    <source>
    </source>
</evidence>
<evidence type="ECO:0000305" key="11">
    <source>
    </source>
</evidence>
<evidence type="ECO:0007744" key="12">
    <source>
    </source>
</evidence>
<reference key="1">
    <citation type="journal article" date="1998" name="Plant J.">
        <title>Two different genes encode ferrochelatase in Arabidopsis: mapping, expression and subcellular targeting of the precursor proteins.</title>
        <authorList>
            <person name="Chow K.-S."/>
            <person name="Singh D.P."/>
            <person name="Walker A."/>
            <person name="Smith A.G."/>
        </authorList>
    </citation>
    <scope>NUCLEOTIDE SEQUENCE [MRNA]</scope>
    <source>
        <strain>cv. Columbia</strain>
        <tissue>Seedling</tissue>
    </source>
</reference>
<reference key="2">
    <citation type="journal article" date="1999" name="Nature">
        <title>Sequence and analysis of chromosome 2 of the plant Arabidopsis thaliana.</title>
        <authorList>
            <person name="Lin X."/>
            <person name="Kaul S."/>
            <person name="Rounsley S.D."/>
            <person name="Shea T.P."/>
            <person name="Benito M.-I."/>
            <person name="Town C.D."/>
            <person name="Fujii C.Y."/>
            <person name="Mason T.M."/>
            <person name="Bowman C.L."/>
            <person name="Barnstead M.E."/>
            <person name="Feldblyum T.V."/>
            <person name="Buell C.R."/>
            <person name="Ketchum K.A."/>
            <person name="Lee J.J."/>
            <person name="Ronning C.M."/>
            <person name="Koo H.L."/>
            <person name="Moffat K.S."/>
            <person name="Cronin L.A."/>
            <person name="Shen M."/>
            <person name="Pai G."/>
            <person name="Van Aken S."/>
            <person name="Umayam L."/>
            <person name="Tallon L.J."/>
            <person name="Gill J.E."/>
            <person name="Adams M.D."/>
            <person name="Carrera A.J."/>
            <person name="Creasy T.H."/>
            <person name="Goodman H.M."/>
            <person name="Somerville C.R."/>
            <person name="Copenhaver G.P."/>
            <person name="Preuss D."/>
            <person name="Nierman W.C."/>
            <person name="White O."/>
            <person name="Eisen J.A."/>
            <person name="Salzberg S.L."/>
            <person name="Fraser C.M."/>
            <person name="Venter J.C."/>
        </authorList>
    </citation>
    <scope>NUCLEOTIDE SEQUENCE [LARGE SCALE GENOMIC DNA]</scope>
    <source>
        <strain>cv. Columbia</strain>
    </source>
</reference>
<reference key="3">
    <citation type="journal article" date="2017" name="Plant J.">
        <title>Araport11: a complete reannotation of the Arabidopsis thaliana reference genome.</title>
        <authorList>
            <person name="Cheng C.Y."/>
            <person name="Krishnakumar V."/>
            <person name="Chan A.P."/>
            <person name="Thibaud-Nissen F."/>
            <person name="Schobel S."/>
            <person name="Town C.D."/>
        </authorList>
    </citation>
    <scope>GENOME REANNOTATION</scope>
    <source>
        <strain>cv. Columbia</strain>
    </source>
</reference>
<reference key="4">
    <citation type="journal article" date="2003" name="Science">
        <title>Empirical analysis of transcriptional activity in the Arabidopsis genome.</title>
        <authorList>
            <person name="Yamada K."/>
            <person name="Lim J."/>
            <person name="Dale J.M."/>
            <person name="Chen H."/>
            <person name="Shinn P."/>
            <person name="Palm C.J."/>
            <person name="Southwick A.M."/>
            <person name="Wu H.C."/>
            <person name="Kim C.J."/>
            <person name="Nguyen M."/>
            <person name="Pham P.K."/>
            <person name="Cheuk R.F."/>
            <person name="Karlin-Newmann G."/>
            <person name="Liu S.X."/>
            <person name="Lam B."/>
            <person name="Sakano H."/>
            <person name="Wu T."/>
            <person name="Yu G."/>
            <person name="Miranda M."/>
            <person name="Quach H.L."/>
            <person name="Tripp M."/>
            <person name="Chang C.H."/>
            <person name="Lee J.M."/>
            <person name="Toriumi M.J."/>
            <person name="Chan M.M."/>
            <person name="Tang C.C."/>
            <person name="Onodera C.S."/>
            <person name="Deng J.M."/>
            <person name="Akiyama K."/>
            <person name="Ansari Y."/>
            <person name="Arakawa T."/>
            <person name="Banh J."/>
            <person name="Banno F."/>
            <person name="Bowser L."/>
            <person name="Brooks S.Y."/>
            <person name="Carninci P."/>
            <person name="Chao Q."/>
            <person name="Choy N."/>
            <person name="Enju A."/>
            <person name="Goldsmith A.D."/>
            <person name="Gurjal M."/>
            <person name="Hansen N.F."/>
            <person name="Hayashizaki Y."/>
            <person name="Johnson-Hopson C."/>
            <person name="Hsuan V.W."/>
            <person name="Iida K."/>
            <person name="Karnes M."/>
            <person name="Khan S."/>
            <person name="Koesema E."/>
            <person name="Ishida J."/>
            <person name="Jiang P.X."/>
            <person name="Jones T."/>
            <person name="Kawai J."/>
            <person name="Kamiya A."/>
            <person name="Meyers C."/>
            <person name="Nakajima M."/>
            <person name="Narusaka M."/>
            <person name="Seki M."/>
            <person name="Sakurai T."/>
            <person name="Satou M."/>
            <person name="Tamse R."/>
            <person name="Vaysberg M."/>
            <person name="Wallender E.K."/>
            <person name="Wong C."/>
            <person name="Yamamura Y."/>
            <person name="Yuan S."/>
            <person name="Shinozaki K."/>
            <person name="Davis R.W."/>
            <person name="Theologis A."/>
            <person name="Ecker J.R."/>
        </authorList>
    </citation>
    <scope>NUCLEOTIDE SEQUENCE [LARGE SCALE MRNA]</scope>
    <source>
        <strain>cv. Columbia</strain>
    </source>
</reference>
<reference key="5">
    <citation type="journal article" date="1997" name="Eur. J. Biochem.">
        <title>Molecular localisation of ferrochelatase in higher plant chloroplasts.</title>
        <authorList>
            <person name="Roper J.M."/>
            <person name="Smith A.G."/>
        </authorList>
    </citation>
    <scope>SUBCELLULAR LOCATION</scope>
</reference>
<reference key="6">
    <citation type="journal article" date="2001" name="FEBS Lett.">
        <title>Arabidopsis thaliana ferrochelatase-I and -II are not imported into Arabidopsis mitochondria.</title>
        <authorList>
            <person name="Lister R."/>
            <person name="Chew O."/>
            <person name="Rudhe C."/>
            <person name="Lee M.N."/>
            <person name="Whelan J."/>
        </authorList>
    </citation>
    <scope>SUBCELLULAR LOCATION</scope>
</reference>
<reference key="7">
    <citation type="journal article" date="2002" name="Plant Mol. Biol.">
        <title>Expression analysis of the two ferrochelatase genes in Arabidopsis in different tissues and under stress conditions reveals their different roles in haem biosynthesis.</title>
        <authorList>
            <person name="Singh D.P."/>
            <person name="Cornah J.E."/>
            <person name="Hadingham S."/>
            <person name="Smith A.G."/>
        </authorList>
    </citation>
    <scope>TISSUE SPECIFICITY</scope>
    <scope>INDUCTION</scope>
</reference>
<reference key="8">
    <citation type="journal article" date="2012" name="Mol. Cell. Proteomics">
        <title>Comparative large-scale characterisation of plant vs. mammal proteins reveals similar and idiosyncratic N-alpha acetylation features.</title>
        <authorList>
            <person name="Bienvenut W.V."/>
            <person name="Sumpton D."/>
            <person name="Martinez A."/>
            <person name="Lilla S."/>
            <person name="Espagne C."/>
            <person name="Meinnel T."/>
            <person name="Giglione C."/>
        </authorList>
    </citation>
    <scope>ACETYLATION [LARGE SCALE ANALYSIS] AT VAL-84</scope>
    <scope>CLEAVAGE OF TRANSIT PEPTIDE [LARGE SCALE ANALYSIS] AFTER SER-83</scope>
    <scope>IDENTIFICATION BY MASS SPECTROMETRY [LARGE SCALE ANALYSIS]</scope>
</reference>
<reference key="9">
    <citation type="journal article" date="2015" name="Plant Cell Environ.">
        <title>Functional characterization of the two ferrochelatases in Arabidopsis thaliana.</title>
        <authorList>
            <person name="Scharfenberg M."/>
            <person name="Mittermayr L."/>
            <person name="von Roepenack-Lahaye E."/>
            <person name="Schlicke H."/>
            <person name="Grimm B."/>
            <person name="Leister D."/>
            <person name="Kleine T."/>
        </authorList>
    </citation>
    <scope>FUNCTION</scope>
    <scope>DISRUPTION PHENOTYPE</scope>
</reference>
<reference key="10">
    <citation type="journal article" date="2015" name="Science">
        <title>Ubiquitin facilitates a quality-control pathway that removes damaged chloroplasts.</title>
        <authorList>
            <person name="Woodson J.D."/>
            <person name="Joens M.S."/>
            <person name="Sinson A.B."/>
            <person name="Gilkerson J."/>
            <person name="Salome P.A."/>
            <person name="Weigel D."/>
            <person name="Fitzpatrick J.A."/>
            <person name="Chory J."/>
        </authorList>
    </citation>
    <scope>FUNCTION</scope>
    <scope>DISRUPTION PHENOTYPE</scope>
</reference>
<dbReference type="EC" id="4.98.1.1" evidence="9"/>
<dbReference type="EMBL" id="Y13156">
    <property type="protein sequence ID" value="CAA73614.1"/>
    <property type="molecule type" value="mRNA"/>
</dbReference>
<dbReference type="EMBL" id="AC002338">
    <property type="protein sequence ID" value="AAM14820.1"/>
    <property type="molecule type" value="Genomic_DNA"/>
</dbReference>
<dbReference type="EMBL" id="U93215">
    <property type="protein sequence ID" value="AAB63095.1"/>
    <property type="molecule type" value="Genomic_DNA"/>
</dbReference>
<dbReference type="EMBL" id="CP002685">
    <property type="protein sequence ID" value="AEC08379.1"/>
    <property type="molecule type" value="Genomic_DNA"/>
</dbReference>
<dbReference type="EMBL" id="BT000465">
    <property type="protein sequence ID" value="AAN17442.1"/>
    <property type="molecule type" value="mRNA"/>
</dbReference>
<dbReference type="EMBL" id="BT008877">
    <property type="protein sequence ID" value="AAP68316.1"/>
    <property type="molecule type" value="mRNA"/>
</dbReference>
<dbReference type="PIR" id="H84707">
    <property type="entry name" value="H84707"/>
</dbReference>
<dbReference type="RefSeq" id="NP_180598.1">
    <molecule id="O04921-1"/>
    <property type="nucleotide sequence ID" value="NM_128592.3"/>
</dbReference>
<dbReference type="SMR" id="O04921"/>
<dbReference type="BioGRID" id="2938">
    <property type="interactions" value="6"/>
</dbReference>
<dbReference type="FunCoup" id="O04921">
    <property type="interactions" value="3526"/>
</dbReference>
<dbReference type="IntAct" id="O04921">
    <property type="interactions" value="4"/>
</dbReference>
<dbReference type="STRING" id="3702.O04921"/>
<dbReference type="iPTMnet" id="O04921"/>
<dbReference type="PaxDb" id="3702-AT2G30390.2"/>
<dbReference type="ProteomicsDB" id="230359">
    <molecule id="O04921-1"/>
</dbReference>
<dbReference type="EnsemblPlants" id="AT2G30390.1">
    <molecule id="O04921-1"/>
    <property type="protein sequence ID" value="AT2G30390.1"/>
    <property type="gene ID" value="AT2G30390"/>
</dbReference>
<dbReference type="GeneID" id="817589"/>
<dbReference type="Gramene" id="AT2G30390.1">
    <molecule id="O04921-1"/>
    <property type="protein sequence ID" value="AT2G30390.1"/>
    <property type="gene ID" value="AT2G30390"/>
</dbReference>
<dbReference type="KEGG" id="ath:AT2G30390"/>
<dbReference type="Araport" id="AT2G30390"/>
<dbReference type="TAIR" id="AT2G30390">
    <property type="gene designation" value="FC2"/>
</dbReference>
<dbReference type="eggNOG" id="KOG1321">
    <property type="taxonomic scope" value="Eukaryota"/>
</dbReference>
<dbReference type="HOGENOM" id="CLU_018884_4_3_1"/>
<dbReference type="InParanoid" id="O04921"/>
<dbReference type="OrthoDB" id="1323at2759"/>
<dbReference type="PhylomeDB" id="O04921"/>
<dbReference type="BioCyc" id="ARA:AT2G30390-MONOMER"/>
<dbReference type="UniPathway" id="UPA00252">
    <property type="reaction ID" value="UER00325"/>
</dbReference>
<dbReference type="PRO" id="PR:O04921"/>
<dbReference type="Proteomes" id="UP000006548">
    <property type="component" value="Chromosome 2"/>
</dbReference>
<dbReference type="ExpressionAtlas" id="O04921">
    <property type="expression patterns" value="baseline and differential"/>
</dbReference>
<dbReference type="GO" id="GO:0031969">
    <property type="term" value="C:chloroplast membrane"/>
    <property type="evidence" value="ECO:0007669"/>
    <property type="project" value="UniProtKB-SubCell"/>
</dbReference>
<dbReference type="GO" id="GO:0009535">
    <property type="term" value="C:chloroplast thylakoid membrane"/>
    <property type="evidence" value="ECO:0007669"/>
    <property type="project" value="UniProtKB-SubCell"/>
</dbReference>
<dbReference type="GO" id="GO:0055035">
    <property type="term" value="C:plastid thylakoid membrane"/>
    <property type="evidence" value="ECO:0000314"/>
    <property type="project" value="UniProtKB"/>
</dbReference>
<dbReference type="GO" id="GO:0004325">
    <property type="term" value="F:ferrochelatase activity"/>
    <property type="evidence" value="ECO:0007669"/>
    <property type="project" value="InterPro"/>
</dbReference>
<dbReference type="GO" id="GO:0006783">
    <property type="term" value="P:heme biosynthetic process"/>
    <property type="evidence" value="ECO:0000315"/>
    <property type="project" value="UniProtKB"/>
</dbReference>
<dbReference type="GO" id="GO:0006779">
    <property type="term" value="P:porphyrin-containing compound biosynthetic process"/>
    <property type="evidence" value="ECO:0000315"/>
    <property type="project" value="UniProtKB"/>
</dbReference>
<dbReference type="GO" id="GO:0033014">
    <property type="term" value="P:tetrapyrrole biosynthetic process"/>
    <property type="evidence" value="ECO:0000315"/>
    <property type="project" value="UniProtKB"/>
</dbReference>
<dbReference type="CDD" id="cd00419">
    <property type="entry name" value="Ferrochelatase_C"/>
    <property type="match status" value="1"/>
</dbReference>
<dbReference type="CDD" id="cd03411">
    <property type="entry name" value="Ferrochelatase_N"/>
    <property type="match status" value="1"/>
</dbReference>
<dbReference type="FunFam" id="3.40.50.1400:FF:000006">
    <property type="entry name" value="Ferrochelatase"/>
    <property type="match status" value="1"/>
</dbReference>
<dbReference type="Gene3D" id="3.40.50.1400">
    <property type="match status" value="2"/>
</dbReference>
<dbReference type="Gene3D" id="1.10.3460.10">
    <property type="entry name" value="Chlorophyll a/b binding protein domain"/>
    <property type="match status" value="1"/>
</dbReference>
<dbReference type="HAMAP" id="MF_00323">
    <property type="entry name" value="Ferrochelatase"/>
    <property type="match status" value="1"/>
</dbReference>
<dbReference type="InterPro" id="IPR001015">
    <property type="entry name" value="Ferrochelatase"/>
</dbReference>
<dbReference type="InterPro" id="IPR019772">
    <property type="entry name" value="Ferrochelatase_AS"/>
</dbReference>
<dbReference type="InterPro" id="IPR033644">
    <property type="entry name" value="Ferrochelatase_C"/>
</dbReference>
<dbReference type="InterPro" id="IPR033659">
    <property type="entry name" value="Ferrochelatase_N"/>
</dbReference>
<dbReference type="NCBIfam" id="TIGR00109">
    <property type="entry name" value="hemH"/>
    <property type="match status" value="1"/>
</dbReference>
<dbReference type="PANTHER" id="PTHR11108">
    <property type="entry name" value="FERROCHELATASE"/>
    <property type="match status" value="1"/>
</dbReference>
<dbReference type="PANTHER" id="PTHR11108:SF1">
    <property type="entry name" value="FERROCHELATASE, MITOCHONDRIAL"/>
    <property type="match status" value="1"/>
</dbReference>
<dbReference type="Pfam" id="PF00762">
    <property type="entry name" value="Ferrochelatase"/>
    <property type="match status" value="1"/>
</dbReference>
<dbReference type="SUPFAM" id="SSF53800">
    <property type="entry name" value="Chelatase"/>
    <property type="match status" value="1"/>
</dbReference>
<dbReference type="SUPFAM" id="SSF103511">
    <property type="entry name" value="Chlorophyll a-b binding protein"/>
    <property type="match status" value="1"/>
</dbReference>
<dbReference type="PROSITE" id="PS00534">
    <property type="entry name" value="FERROCHELATASE"/>
    <property type="match status" value="1"/>
</dbReference>
<gene>
    <name evidence="7" type="primary">FC2</name>
    <name evidence="8" type="synonym">FC-II</name>
    <name type="ordered locus">At2g30390</name>
    <name type="ORF">T06B20.24</name>
    <name type="ORF">T9D9.1</name>
</gene>
<proteinExistence type="evidence at protein level"/>
<name>HEMH2_ARATH</name>
<keyword id="KW-0007">Acetylation</keyword>
<keyword id="KW-0025">Alternative splicing</keyword>
<keyword id="KW-0150">Chloroplast</keyword>
<keyword id="KW-0350">Heme biosynthesis</keyword>
<keyword id="KW-0408">Iron</keyword>
<keyword id="KW-0456">Lyase</keyword>
<keyword id="KW-0472">Membrane</keyword>
<keyword id="KW-0934">Plastid</keyword>
<keyword id="KW-0627">Porphyrin biosynthesis</keyword>
<keyword id="KW-1185">Reference proteome</keyword>
<keyword id="KW-0793">Thylakoid</keyword>
<keyword id="KW-0809">Transit peptide</keyword>
<sequence>MNCPAMTASPSSSSSSSYSTFRPPPPLLPQLSNDSQRSVVMHCTRLPFEAFAATSSNRLLGKHSLPLRAALVTSNPLNISSSSVISDAISSSSVITDDAKIGVLLLNLGGPETLDDVQPFLFNLFADPDIIRLPPVFQFLQKPLAQFISVARAPKSKEGYASIGGGSPLRHITDAQAEELRKCLWEKNVPAKVYVGMRYWHPFTEEAIEQIKRDGITKLVVLPLYPQFSISTSGSSLRLLERIFREDEYLVNMQHTVIPSWYQREGYIKAMANLIQSELGKFGSPNQVVIFFSAHGVPLAYVEEAGDPYKAEMEECVDLIMEELDKRKITNAYTLAYQSRVGPVEWLKPYTEEAITELGKKGVENLLAVPISFVSEHIETLEEIDVEYKELALKSGIKNWGRVPALGTEPMFISDLADAVVESLPYVGAMAVSNLEARQSLVPLGSVEELLATYDSQRRELPAPVTMWEWGWTKSAETWNGRAAMLAVLALLVLEVTTGKGFLHQWGILPSL</sequence>